<evidence type="ECO:0000250" key="1"/>
<evidence type="ECO:0000255" key="2"/>
<evidence type="ECO:0000255" key="3">
    <source>
        <dbReference type="PROSITE-ProRule" id="PRU00114"/>
    </source>
</evidence>
<evidence type="ECO:0000255" key="4">
    <source>
        <dbReference type="PROSITE-ProRule" id="PRU00316"/>
    </source>
</evidence>
<evidence type="ECO:0000256" key="5">
    <source>
        <dbReference type="SAM" id="MobiDB-lite"/>
    </source>
</evidence>
<evidence type="ECO:0000305" key="6"/>
<feature type="signal peptide" evidence="2">
    <location>
        <begin position="1"/>
        <end position="16"/>
    </location>
</feature>
<feature type="chain" id="PRO_0000014841" description="Leucine-rich repeat and fibronectin type-III domain-containing protein 3">
    <location>
        <begin position="17"/>
        <end position="628"/>
    </location>
</feature>
<feature type="topological domain" description="Extracellular" evidence="2">
    <location>
        <begin position="17"/>
        <end position="539"/>
    </location>
</feature>
<feature type="transmembrane region" description="Helical" evidence="2">
    <location>
        <begin position="540"/>
        <end position="560"/>
    </location>
</feature>
<feature type="topological domain" description="Cytoplasmic" evidence="2">
    <location>
        <begin position="561"/>
        <end position="628"/>
    </location>
</feature>
<feature type="domain" description="LRRNT">
    <location>
        <begin position="19"/>
        <end position="59"/>
    </location>
</feature>
<feature type="repeat" description="LRR 1">
    <location>
        <begin position="60"/>
        <end position="83"/>
    </location>
</feature>
<feature type="repeat" description="LRR 2">
    <location>
        <begin position="84"/>
        <end position="105"/>
    </location>
</feature>
<feature type="repeat" description="LRR 3">
    <location>
        <begin position="108"/>
        <end position="129"/>
    </location>
</feature>
<feature type="repeat" description="LRR 4">
    <location>
        <begin position="132"/>
        <end position="153"/>
    </location>
</feature>
<feature type="repeat" description="LRR 5">
    <location>
        <begin position="157"/>
        <end position="178"/>
    </location>
</feature>
<feature type="repeat" description="LRR 6">
    <location>
        <begin position="181"/>
        <end position="202"/>
    </location>
</feature>
<feature type="repeat" description="LRR 7">
    <location>
        <begin position="205"/>
        <end position="226"/>
    </location>
</feature>
<feature type="domain" description="LRRCT">
    <location>
        <begin position="249"/>
        <end position="295"/>
    </location>
</feature>
<feature type="domain" description="Ig-like">
    <location>
        <begin position="295"/>
        <end position="382"/>
    </location>
</feature>
<feature type="domain" description="Fibronectin type-III" evidence="4">
    <location>
        <begin position="425"/>
        <end position="523"/>
    </location>
</feature>
<feature type="region of interest" description="Disordered" evidence="5">
    <location>
        <begin position="382"/>
        <end position="430"/>
    </location>
</feature>
<feature type="compositionally biased region" description="Low complexity" evidence="5">
    <location>
        <begin position="406"/>
        <end position="422"/>
    </location>
</feature>
<feature type="glycosylation site" description="N-linked (GlcNAc...) asparagine" evidence="2">
    <location>
        <position position="81"/>
    </location>
</feature>
<feature type="glycosylation site" description="N-linked (GlcNAc...) asparagine" evidence="2">
    <location>
        <position position="339"/>
    </location>
</feature>
<feature type="glycosylation site" description="N-linked (GlcNAc...) asparagine" evidence="2">
    <location>
        <position position="348"/>
    </location>
</feature>
<feature type="glycosylation site" description="N-linked (GlcNAc...) asparagine" evidence="2">
    <location>
        <position position="393"/>
    </location>
</feature>
<feature type="glycosylation site" description="N-linked (GlcNAc...) asparagine" evidence="2">
    <location>
        <position position="462"/>
    </location>
</feature>
<feature type="disulfide bond" evidence="3">
    <location>
        <begin position="317"/>
        <end position="366"/>
    </location>
</feature>
<feature type="sequence variant" id="VAR_049895" description="In dbSNP:rs34933126.">
    <original>A</original>
    <variation>V</variation>
    <location>
        <position position="14"/>
    </location>
</feature>
<feature type="sequence conflict" description="In Ref. 2; AAQ88494." evidence="6" ref="2">
    <location>
        <position position="197"/>
    </location>
</feature>
<sequence>MAILPLLLCLLPLAPASSPPQSATPSPCPRRCRCQTQSLPLSVLCPGAGLLFVPPSLDRRAAELRLADNFIASVRRRDLANMTGLLHLSLSRNTIRHVAAGAFADLRALRALHLDGNRLTSLGEGQLRGLVNLRHLILSNNQLAALAAGALDDCAETLEDLDLSYNNLEQLPWEALGRLGNVNTLGLDHNLLASVPAGAFSRLHKLARLDMTSNRLTTIPPDPLFSRLPLLARPRGSPASALVLAFGGNPLHCNCELVWLRRLAREDDLEACASPPALGGRYFWAVGEEEFVCEPPVVTHRSPPLAVPAGRPAALRCRAVGDPEPRVRWVSPQGRLLGNSSRARAFPNGTLELLVTEPGDGGIFTCIAANAAGEATAAVELTVGPPPPPQLANSTSCDPPRDGDPDALTPPSAASASAKVADTGPPTDRGVQVTEHGATAALVQWPDQRPIPGIRMYQIQYNSSADDILVYRMIPAESRSFLLTDLASGRTYDLCVLAVYEDSATGLTATRPVGCARFSTEPALRPCGAPHAPFLGGTMIIALGGVIVASVLVFIFVLLMRYKVHGGQPPGKAKIPAPVSSVCSQTNGALGPTPTPAPPAPEPAALRAHTVVQLDCEPWGPGHEPVGP</sequence>
<keyword id="KW-0130">Cell adhesion</keyword>
<keyword id="KW-1003">Cell membrane</keyword>
<keyword id="KW-0966">Cell projection</keyword>
<keyword id="KW-1015">Disulfide bond</keyword>
<keyword id="KW-0325">Glycoprotein</keyword>
<keyword id="KW-0393">Immunoglobulin domain</keyword>
<keyword id="KW-0433">Leucine-rich repeat</keyword>
<keyword id="KW-0472">Membrane</keyword>
<keyword id="KW-0628">Postsynaptic cell membrane</keyword>
<keyword id="KW-1267">Proteomics identification</keyword>
<keyword id="KW-1185">Reference proteome</keyword>
<keyword id="KW-0677">Repeat</keyword>
<keyword id="KW-0732">Signal</keyword>
<keyword id="KW-0770">Synapse</keyword>
<keyword id="KW-0812">Transmembrane</keyword>
<keyword id="KW-1133">Transmembrane helix</keyword>
<proteinExistence type="evidence at protein level"/>
<reference key="1">
    <citation type="journal article" date="2004" name="Nat. Genet.">
        <title>Complete sequencing and characterization of 21,243 full-length human cDNAs.</title>
        <authorList>
            <person name="Ota T."/>
            <person name="Suzuki Y."/>
            <person name="Nishikawa T."/>
            <person name="Otsuki T."/>
            <person name="Sugiyama T."/>
            <person name="Irie R."/>
            <person name="Wakamatsu A."/>
            <person name="Hayashi K."/>
            <person name="Sato H."/>
            <person name="Nagai K."/>
            <person name="Kimura K."/>
            <person name="Makita H."/>
            <person name="Sekine M."/>
            <person name="Obayashi M."/>
            <person name="Nishi T."/>
            <person name="Shibahara T."/>
            <person name="Tanaka T."/>
            <person name="Ishii S."/>
            <person name="Yamamoto J."/>
            <person name="Saito K."/>
            <person name="Kawai Y."/>
            <person name="Isono Y."/>
            <person name="Nakamura Y."/>
            <person name="Nagahari K."/>
            <person name="Murakami K."/>
            <person name="Yasuda T."/>
            <person name="Iwayanagi T."/>
            <person name="Wagatsuma M."/>
            <person name="Shiratori A."/>
            <person name="Sudo H."/>
            <person name="Hosoiri T."/>
            <person name="Kaku Y."/>
            <person name="Kodaira H."/>
            <person name="Kondo H."/>
            <person name="Sugawara M."/>
            <person name="Takahashi M."/>
            <person name="Kanda K."/>
            <person name="Yokoi T."/>
            <person name="Furuya T."/>
            <person name="Kikkawa E."/>
            <person name="Omura Y."/>
            <person name="Abe K."/>
            <person name="Kamihara K."/>
            <person name="Katsuta N."/>
            <person name="Sato K."/>
            <person name="Tanikawa M."/>
            <person name="Yamazaki M."/>
            <person name="Ninomiya K."/>
            <person name="Ishibashi T."/>
            <person name="Yamashita H."/>
            <person name="Murakawa K."/>
            <person name="Fujimori K."/>
            <person name="Tanai H."/>
            <person name="Kimata M."/>
            <person name="Watanabe M."/>
            <person name="Hiraoka S."/>
            <person name="Chiba Y."/>
            <person name="Ishida S."/>
            <person name="Ono Y."/>
            <person name="Takiguchi S."/>
            <person name="Watanabe S."/>
            <person name="Yosida M."/>
            <person name="Hotuta T."/>
            <person name="Kusano J."/>
            <person name="Kanehori K."/>
            <person name="Takahashi-Fujii A."/>
            <person name="Hara H."/>
            <person name="Tanase T.-O."/>
            <person name="Nomura Y."/>
            <person name="Togiya S."/>
            <person name="Komai F."/>
            <person name="Hara R."/>
            <person name="Takeuchi K."/>
            <person name="Arita M."/>
            <person name="Imose N."/>
            <person name="Musashino K."/>
            <person name="Yuuki H."/>
            <person name="Oshima A."/>
            <person name="Sasaki N."/>
            <person name="Aotsuka S."/>
            <person name="Yoshikawa Y."/>
            <person name="Matsunawa H."/>
            <person name="Ichihara T."/>
            <person name="Shiohata N."/>
            <person name="Sano S."/>
            <person name="Moriya S."/>
            <person name="Momiyama H."/>
            <person name="Satoh N."/>
            <person name="Takami S."/>
            <person name="Terashima Y."/>
            <person name="Suzuki O."/>
            <person name="Nakagawa S."/>
            <person name="Senoh A."/>
            <person name="Mizoguchi H."/>
            <person name="Goto Y."/>
            <person name="Shimizu F."/>
            <person name="Wakebe H."/>
            <person name="Hishigaki H."/>
            <person name="Watanabe T."/>
            <person name="Sugiyama A."/>
            <person name="Takemoto M."/>
            <person name="Kawakami B."/>
            <person name="Yamazaki M."/>
            <person name="Watanabe K."/>
            <person name="Kumagai A."/>
            <person name="Itakura S."/>
            <person name="Fukuzumi Y."/>
            <person name="Fujimori Y."/>
            <person name="Komiyama M."/>
            <person name="Tashiro H."/>
            <person name="Tanigami A."/>
            <person name="Fujiwara T."/>
            <person name="Ono T."/>
            <person name="Yamada K."/>
            <person name="Fujii Y."/>
            <person name="Ozaki K."/>
            <person name="Hirao M."/>
            <person name="Ohmori Y."/>
            <person name="Kawabata A."/>
            <person name="Hikiji T."/>
            <person name="Kobatake N."/>
            <person name="Inagaki H."/>
            <person name="Ikema Y."/>
            <person name="Okamoto S."/>
            <person name="Okitani R."/>
            <person name="Kawakami T."/>
            <person name="Noguchi S."/>
            <person name="Itoh T."/>
            <person name="Shigeta K."/>
            <person name="Senba T."/>
            <person name="Matsumura K."/>
            <person name="Nakajima Y."/>
            <person name="Mizuno T."/>
            <person name="Morinaga M."/>
            <person name="Sasaki M."/>
            <person name="Togashi T."/>
            <person name="Oyama M."/>
            <person name="Hata H."/>
            <person name="Watanabe M."/>
            <person name="Komatsu T."/>
            <person name="Mizushima-Sugano J."/>
            <person name="Satoh T."/>
            <person name="Shirai Y."/>
            <person name="Takahashi Y."/>
            <person name="Nakagawa K."/>
            <person name="Okumura K."/>
            <person name="Nagase T."/>
            <person name="Nomura N."/>
            <person name="Kikuchi H."/>
            <person name="Masuho Y."/>
            <person name="Yamashita R."/>
            <person name="Nakai K."/>
            <person name="Yada T."/>
            <person name="Nakamura Y."/>
            <person name="Ohara O."/>
            <person name="Isogai T."/>
            <person name="Sugano S."/>
        </authorList>
    </citation>
    <scope>NUCLEOTIDE SEQUENCE [LARGE SCALE MRNA]</scope>
    <source>
        <tissue>Smooth muscle cell</tissue>
    </source>
</reference>
<reference key="2">
    <citation type="journal article" date="2003" name="Genome Res.">
        <title>The secreted protein discovery initiative (SPDI), a large-scale effort to identify novel human secreted and transmembrane proteins: a bioinformatics assessment.</title>
        <authorList>
            <person name="Clark H.F."/>
            <person name="Gurney A.L."/>
            <person name="Abaya E."/>
            <person name="Baker K."/>
            <person name="Baldwin D.T."/>
            <person name="Brush J."/>
            <person name="Chen J."/>
            <person name="Chow B."/>
            <person name="Chui C."/>
            <person name="Crowley C."/>
            <person name="Currell B."/>
            <person name="Deuel B."/>
            <person name="Dowd P."/>
            <person name="Eaton D."/>
            <person name="Foster J.S."/>
            <person name="Grimaldi C."/>
            <person name="Gu Q."/>
            <person name="Hass P.E."/>
            <person name="Heldens S."/>
            <person name="Huang A."/>
            <person name="Kim H.S."/>
            <person name="Klimowski L."/>
            <person name="Jin Y."/>
            <person name="Johnson S."/>
            <person name="Lee J."/>
            <person name="Lewis L."/>
            <person name="Liao D."/>
            <person name="Mark M.R."/>
            <person name="Robbie E."/>
            <person name="Sanchez C."/>
            <person name="Schoenfeld J."/>
            <person name="Seshagiri S."/>
            <person name="Simmons L."/>
            <person name="Singh J."/>
            <person name="Smith V."/>
            <person name="Stinson J."/>
            <person name="Vagts A."/>
            <person name="Vandlen R.L."/>
            <person name="Watanabe C."/>
            <person name="Wieand D."/>
            <person name="Woods K."/>
            <person name="Xie M.-H."/>
            <person name="Yansura D.G."/>
            <person name="Yi S."/>
            <person name="Yu G."/>
            <person name="Yuan J."/>
            <person name="Zhang M."/>
            <person name="Zhang Z."/>
            <person name="Goddard A.D."/>
            <person name="Wood W.I."/>
            <person name="Godowski P.J."/>
            <person name="Gray A.M."/>
        </authorList>
    </citation>
    <scope>NUCLEOTIDE SEQUENCE [LARGE SCALE MRNA]</scope>
</reference>
<reference key="3">
    <citation type="journal article" date="2004" name="Genome Res.">
        <title>The status, quality, and expansion of the NIH full-length cDNA project: the Mammalian Gene Collection (MGC).</title>
        <authorList>
            <consortium name="The MGC Project Team"/>
        </authorList>
    </citation>
    <scope>NUCLEOTIDE SEQUENCE [LARGE SCALE MRNA]</scope>
    <source>
        <tissue>Lung</tissue>
    </source>
</reference>
<protein>
    <recommendedName>
        <fullName>Leucine-rich repeat and fibronectin type-III domain-containing protein 3</fullName>
    </recommendedName>
    <alternativeName>
        <fullName>Synaptic adhesion-like molecule 4</fullName>
    </alternativeName>
</protein>
<accession>Q9BTN0</accession>
<accession>Q6UY10</accession>
<organism>
    <name type="scientific">Homo sapiens</name>
    <name type="common">Human</name>
    <dbReference type="NCBI Taxonomy" id="9606"/>
    <lineage>
        <taxon>Eukaryota</taxon>
        <taxon>Metazoa</taxon>
        <taxon>Chordata</taxon>
        <taxon>Craniata</taxon>
        <taxon>Vertebrata</taxon>
        <taxon>Euteleostomi</taxon>
        <taxon>Mammalia</taxon>
        <taxon>Eutheria</taxon>
        <taxon>Euarchontoglires</taxon>
        <taxon>Primates</taxon>
        <taxon>Haplorrhini</taxon>
        <taxon>Catarrhini</taxon>
        <taxon>Hominidae</taxon>
        <taxon>Homo</taxon>
    </lineage>
</organism>
<comment type="function">
    <text evidence="1">Cell adhesion molecule that mediates homophilic cell-cell adhesion in a Ca(2+)-independent manner. Promotes neurite outgrowth in hippocampal neurons (By similarity).</text>
</comment>
<comment type="subunit">
    <text evidence="1">Can form heteromeric complexes with LRFN1, LRFN2, LRFN4 and LRFN5. Able to form homomeric complexes across cell junctions, between adjacent cells. Does not interact with DLG4 (By similarity).</text>
</comment>
<comment type="subcellular location">
    <subcellularLocation>
        <location evidence="1">Cell membrane</location>
        <topology evidence="1">Single-pass type I membrane protein</topology>
    </subcellularLocation>
    <subcellularLocation>
        <location evidence="1">Cell projection</location>
        <location evidence="1">Axon</location>
    </subcellularLocation>
    <subcellularLocation>
        <location evidence="1">Cell projection</location>
        <location evidence="1">Dendrite</location>
    </subcellularLocation>
    <subcellularLocation>
        <location evidence="1">Synapse</location>
    </subcellularLocation>
    <subcellularLocation>
        <location evidence="1">Presynaptic cell membrane</location>
    </subcellularLocation>
    <subcellularLocation>
        <location evidence="1">Postsynaptic cell membrane</location>
    </subcellularLocation>
</comment>
<comment type="domain">
    <text>Lacks a cytoplasmic PDZ-binding domain, which has been implicated in function of related Lrfn proteins.</text>
</comment>
<comment type="PTM">
    <text evidence="1">N-glycosylated.</text>
</comment>
<comment type="similarity">
    <text evidence="6">Belongs to the LRFN family.</text>
</comment>
<dbReference type="EMBL" id="AK172754">
    <property type="protein sequence ID" value="BAD18740.1"/>
    <property type="molecule type" value="mRNA"/>
</dbReference>
<dbReference type="EMBL" id="AY358127">
    <property type="protein sequence ID" value="AAQ88494.1"/>
    <property type="molecule type" value="mRNA"/>
</dbReference>
<dbReference type="EMBL" id="BC003578">
    <property type="protein sequence ID" value="AAH03578.1"/>
    <property type="molecule type" value="mRNA"/>
</dbReference>
<dbReference type="CCDS" id="CCDS12483.1"/>
<dbReference type="RefSeq" id="NP_078785.1">
    <property type="nucleotide sequence ID" value="NM_024509.2"/>
</dbReference>
<dbReference type="RefSeq" id="XP_016882791.1">
    <property type="nucleotide sequence ID" value="XM_017027302.1"/>
</dbReference>
<dbReference type="SMR" id="Q9BTN0"/>
<dbReference type="BioGRID" id="122664">
    <property type="interactions" value="97"/>
</dbReference>
<dbReference type="FunCoup" id="Q9BTN0">
    <property type="interactions" value="505"/>
</dbReference>
<dbReference type="IntAct" id="Q9BTN0">
    <property type="interactions" value="46"/>
</dbReference>
<dbReference type="STRING" id="9606.ENSP00000246529"/>
<dbReference type="GlyCosmos" id="Q9BTN0">
    <property type="glycosylation" value="5 sites, No reported glycans"/>
</dbReference>
<dbReference type="GlyGen" id="Q9BTN0">
    <property type="glycosylation" value="8 sites, 1 N-linked glycan (1 site)"/>
</dbReference>
<dbReference type="iPTMnet" id="Q9BTN0"/>
<dbReference type="PhosphoSitePlus" id="Q9BTN0"/>
<dbReference type="BioMuta" id="LRFN3"/>
<dbReference type="DMDM" id="62286945"/>
<dbReference type="jPOST" id="Q9BTN0"/>
<dbReference type="MassIVE" id="Q9BTN0"/>
<dbReference type="PaxDb" id="9606-ENSP00000466989"/>
<dbReference type="PeptideAtlas" id="Q9BTN0"/>
<dbReference type="ProteomicsDB" id="79001"/>
<dbReference type="Antibodypedia" id="29620">
    <property type="antibodies" value="78 antibodies from 25 providers"/>
</dbReference>
<dbReference type="DNASU" id="79414"/>
<dbReference type="Ensembl" id="ENST00000246529.4">
    <property type="protein sequence ID" value="ENSP00000246529.3"/>
    <property type="gene ID" value="ENSG00000126243.9"/>
</dbReference>
<dbReference type="Ensembl" id="ENST00000588831.5">
    <property type="protein sequence ID" value="ENSP00000466989.1"/>
    <property type="gene ID" value="ENSG00000126243.9"/>
</dbReference>
<dbReference type="GeneID" id="79414"/>
<dbReference type="KEGG" id="hsa:79414"/>
<dbReference type="MANE-Select" id="ENST00000246529.4">
    <property type="protein sequence ID" value="ENSP00000246529.3"/>
    <property type="RefSeq nucleotide sequence ID" value="NM_024509.2"/>
    <property type="RefSeq protein sequence ID" value="NP_078785.1"/>
</dbReference>
<dbReference type="UCSC" id="uc002oco.4">
    <property type="organism name" value="human"/>
</dbReference>
<dbReference type="AGR" id="HGNC:28370"/>
<dbReference type="CTD" id="79414"/>
<dbReference type="DisGeNET" id="79414"/>
<dbReference type="GeneCards" id="LRFN3"/>
<dbReference type="HGNC" id="HGNC:28370">
    <property type="gene designation" value="LRFN3"/>
</dbReference>
<dbReference type="HPA" id="ENSG00000126243">
    <property type="expression patterns" value="Low tissue specificity"/>
</dbReference>
<dbReference type="MIM" id="612809">
    <property type="type" value="gene"/>
</dbReference>
<dbReference type="neXtProt" id="NX_Q9BTN0"/>
<dbReference type="OpenTargets" id="ENSG00000126243"/>
<dbReference type="PharmGKB" id="PA134880779"/>
<dbReference type="VEuPathDB" id="HostDB:ENSG00000126243"/>
<dbReference type="eggNOG" id="KOG0619">
    <property type="taxonomic scope" value="Eukaryota"/>
</dbReference>
<dbReference type="GeneTree" id="ENSGT00940000161203"/>
<dbReference type="HOGENOM" id="CLU_016998_1_0_1"/>
<dbReference type="InParanoid" id="Q9BTN0"/>
<dbReference type="OMA" id="EQEYKQC"/>
<dbReference type="OrthoDB" id="1394818at2759"/>
<dbReference type="PAN-GO" id="Q9BTN0">
    <property type="GO annotations" value="2 GO annotations based on evolutionary models"/>
</dbReference>
<dbReference type="PhylomeDB" id="Q9BTN0"/>
<dbReference type="PathwayCommons" id="Q9BTN0"/>
<dbReference type="Reactome" id="R-HSA-8849932">
    <property type="pathway name" value="Synaptic adhesion-like molecules"/>
</dbReference>
<dbReference type="SignaLink" id="Q9BTN0"/>
<dbReference type="SIGNOR" id="Q9BTN0"/>
<dbReference type="BioGRID-ORCS" id="79414">
    <property type="hits" value="12 hits in 1147 CRISPR screens"/>
</dbReference>
<dbReference type="ChiTaRS" id="LRFN3">
    <property type="organism name" value="human"/>
</dbReference>
<dbReference type="GenomeRNAi" id="79414"/>
<dbReference type="Pharos" id="Q9BTN0">
    <property type="development level" value="Tdark"/>
</dbReference>
<dbReference type="PRO" id="PR:Q9BTN0"/>
<dbReference type="Proteomes" id="UP000005640">
    <property type="component" value="Chromosome 19"/>
</dbReference>
<dbReference type="RNAct" id="Q9BTN0">
    <property type="molecule type" value="protein"/>
</dbReference>
<dbReference type="Bgee" id="ENSG00000126243">
    <property type="expression patterns" value="Expressed in cortical plate and 101 other cell types or tissues"/>
</dbReference>
<dbReference type="GO" id="GO:0030424">
    <property type="term" value="C:axon"/>
    <property type="evidence" value="ECO:0007669"/>
    <property type="project" value="UniProtKB-SubCell"/>
</dbReference>
<dbReference type="GO" id="GO:0009986">
    <property type="term" value="C:cell surface"/>
    <property type="evidence" value="ECO:0000318"/>
    <property type="project" value="GO_Central"/>
</dbReference>
<dbReference type="GO" id="GO:0030425">
    <property type="term" value="C:dendrite"/>
    <property type="evidence" value="ECO:0007669"/>
    <property type="project" value="UniProtKB-SubCell"/>
</dbReference>
<dbReference type="GO" id="GO:0098978">
    <property type="term" value="C:glutamatergic synapse"/>
    <property type="evidence" value="ECO:0007669"/>
    <property type="project" value="Ensembl"/>
</dbReference>
<dbReference type="GO" id="GO:0005886">
    <property type="term" value="C:plasma membrane"/>
    <property type="evidence" value="ECO:0000304"/>
    <property type="project" value="Reactome"/>
</dbReference>
<dbReference type="GO" id="GO:0098839">
    <property type="term" value="C:postsynaptic density membrane"/>
    <property type="evidence" value="ECO:0007669"/>
    <property type="project" value="Ensembl"/>
</dbReference>
<dbReference type="GO" id="GO:0048787">
    <property type="term" value="C:presynaptic active zone membrane"/>
    <property type="evidence" value="ECO:0000318"/>
    <property type="project" value="GO_Central"/>
</dbReference>
<dbReference type="GO" id="GO:1905606">
    <property type="term" value="P:regulation of presynapse assembly"/>
    <property type="evidence" value="ECO:0007669"/>
    <property type="project" value="Ensembl"/>
</dbReference>
<dbReference type="GO" id="GO:0099179">
    <property type="term" value="P:regulation of synaptic membrane adhesion"/>
    <property type="evidence" value="ECO:0007669"/>
    <property type="project" value="Ensembl"/>
</dbReference>
<dbReference type="GO" id="GO:0099560">
    <property type="term" value="P:synaptic membrane adhesion"/>
    <property type="evidence" value="ECO:0007669"/>
    <property type="project" value="Ensembl"/>
</dbReference>
<dbReference type="CDD" id="cd00063">
    <property type="entry name" value="FN3"/>
    <property type="match status" value="1"/>
</dbReference>
<dbReference type="FunFam" id="2.60.40.10:FF:000235">
    <property type="entry name" value="Leucine-rich repeat and fibronectin type III domain-containing 2"/>
    <property type="match status" value="1"/>
</dbReference>
<dbReference type="FunFam" id="2.60.40.10:FF:000091">
    <property type="entry name" value="Leucine-rich repeat and fibronectin type III domain-containing protein 1"/>
    <property type="match status" value="1"/>
</dbReference>
<dbReference type="FunFam" id="3.80.10.10:FF:000019">
    <property type="entry name" value="leucine-rich repeat and fibronectin type III domain-containing protein 1"/>
    <property type="match status" value="1"/>
</dbReference>
<dbReference type="FunFam" id="3.80.10.10:FF:000209">
    <property type="entry name" value="leucine-rich repeat and fibronectin type-III domain-containing protein 3"/>
    <property type="match status" value="1"/>
</dbReference>
<dbReference type="Gene3D" id="2.60.40.10">
    <property type="entry name" value="Immunoglobulins"/>
    <property type="match status" value="2"/>
</dbReference>
<dbReference type="Gene3D" id="3.80.10.10">
    <property type="entry name" value="Ribonuclease Inhibitor"/>
    <property type="match status" value="2"/>
</dbReference>
<dbReference type="InterPro" id="IPR000483">
    <property type="entry name" value="Cys-rich_flank_reg_C"/>
</dbReference>
<dbReference type="InterPro" id="IPR003961">
    <property type="entry name" value="FN3_dom"/>
</dbReference>
<dbReference type="InterPro" id="IPR036116">
    <property type="entry name" value="FN3_sf"/>
</dbReference>
<dbReference type="InterPro" id="IPR007110">
    <property type="entry name" value="Ig-like_dom"/>
</dbReference>
<dbReference type="InterPro" id="IPR036179">
    <property type="entry name" value="Ig-like_dom_sf"/>
</dbReference>
<dbReference type="InterPro" id="IPR013783">
    <property type="entry name" value="Ig-like_fold"/>
</dbReference>
<dbReference type="InterPro" id="IPR013098">
    <property type="entry name" value="Ig_I-set"/>
</dbReference>
<dbReference type="InterPro" id="IPR003599">
    <property type="entry name" value="Ig_sub"/>
</dbReference>
<dbReference type="InterPro" id="IPR003598">
    <property type="entry name" value="Ig_sub2"/>
</dbReference>
<dbReference type="InterPro" id="IPR001611">
    <property type="entry name" value="Leu-rich_rpt"/>
</dbReference>
<dbReference type="InterPro" id="IPR003591">
    <property type="entry name" value="Leu-rich_rpt_typical-subtyp"/>
</dbReference>
<dbReference type="InterPro" id="IPR050467">
    <property type="entry name" value="LRFN"/>
</dbReference>
<dbReference type="InterPro" id="IPR032675">
    <property type="entry name" value="LRR_dom_sf"/>
</dbReference>
<dbReference type="PANTHER" id="PTHR45842:SF5">
    <property type="entry name" value="LEUCINE-RICH REPEAT AND FIBRONECTIN TYPE-III DOMAIN-CONTAINING PROTEIN 3"/>
    <property type="match status" value="1"/>
</dbReference>
<dbReference type="PANTHER" id="PTHR45842">
    <property type="entry name" value="SYNAPTIC ADHESION-LIKE MOLECULE SALM"/>
    <property type="match status" value="1"/>
</dbReference>
<dbReference type="Pfam" id="PF00041">
    <property type="entry name" value="fn3"/>
    <property type="match status" value="1"/>
</dbReference>
<dbReference type="Pfam" id="PF07679">
    <property type="entry name" value="I-set"/>
    <property type="match status" value="1"/>
</dbReference>
<dbReference type="Pfam" id="PF13855">
    <property type="entry name" value="LRR_8"/>
    <property type="match status" value="2"/>
</dbReference>
<dbReference type="SMART" id="SM00409">
    <property type="entry name" value="IG"/>
    <property type="match status" value="1"/>
</dbReference>
<dbReference type="SMART" id="SM00408">
    <property type="entry name" value="IGc2"/>
    <property type="match status" value="1"/>
</dbReference>
<dbReference type="SMART" id="SM00369">
    <property type="entry name" value="LRR_TYP"/>
    <property type="match status" value="6"/>
</dbReference>
<dbReference type="SMART" id="SM00082">
    <property type="entry name" value="LRRCT"/>
    <property type="match status" value="1"/>
</dbReference>
<dbReference type="SUPFAM" id="SSF49265">
    <property type="entry name" value="Fibronectin type III"/>
    <property type="match status" value="1"/>
</dbReference>
<dbReference type="SUPFAM" id="SSF48726">
    <property type="entry name" value="Immunoglobulin"/>
    <property type="match status" value="1"/>
</dbReference>
<dbReference type="SUPFAM" id="SSF52058">
    <property type="entry name" value="L domain-like"/>
    <property type="match status" value="1"/>
</dbReference>
<dbReference type="PROSITE" id="PS50853">
    <property type="entry name" value="FN3"/>
    <property type="match status" value="1"/>
</dbReference>
<dbReference type="PROSITE" id="PS50835">
    <property type="entry name" value="IG_LIKE"/>
    <property type="match status" value="1"/>
</dbReference>
<name>LRFN3_HUMAN</name>
<gene>
    <name type="primary">LRFN3</name>
    <name type="synonym">SALM4</name>
    <name type="ORF">UNQ5865/PRO34192</name>
</gene>